<comment type="similarity">
    <text evidence="1">To C.jejuni CJ0253.</text>
</comment>
<protein>
    <recommendedName>
        <fullName>Uncharacterized protein jhp_0447</fullName>
    </recommendedName>
</protein>
<reference key="1">
    <citation type="journal article" date="1999" name="Nature">
        <title>Genomic sequence comparison of two unrelated isolates of the human gastric pathogen Helicobacter pylori.</title>
        <authorList>
            <person name="Alm R.A."/>
            <person name="Ling L.-S.L."/>
            <person name="Moir D.T."/>
            <person name="King B.L."/>
            <person name="Brown E.D."/>
            <person name="Doig P.C."/>
            <person name="Smith D.R."/>
            <person name="Noonan B."/>
            <person name="Guild B.C."/>
            <person name="deJonge B.L."/>
            <person name="Carmel G."/>
            <person name="Tummino P.J."/>
            <person name="Caruso A."/>
            <person name="Uria-Nickelsen M."/>
            <person name="Mills D.M."/>
            <person name="Ives C."/>
            <person name="Gibson R."/>
            <person name="Merberg D."/>
            <person name="Mills S.D."/>
            <person name="Jiang Q."/>
            <person name="Taylor D.E."/>
            <person name="Vovis G.F."/>
            <person name="Trust T.J."/>
        </authorList>
    </citation>
    <scope>NUCLEOTIDE SEQUENCE [LARGE SCALE GENOMIC DNA]</scope>
    <source>
        <strain>J99 / ATCC 700824</strain>
    </source>
</reference>
<organism>
    <name type="scientific">Helicobacter pylori (strain J99 / ATCC 700824)</name>
    <name type="common">Campylobacter pylori J99</name>
    <dbReference type="NCBI Taxonomy" id="85963"/>
    <lineage>
        <taxon>Bacteria</taxon>
        <taxon>Pseudomonadati</taxon>
        <taxon>Campylobacterota</taxon>
        <taxon>Epsilonproteobacteria</taxon>
        <taxon>Campylobacterales</taxon>
        <taxon>Helicobacteraceae</taxon>
        <taxon>Helicobacter</taxon>
    </lineage>
</organism>
<name>Y495_HELPJ</name>
<proteinExistence type="predicted"/>
<gene>
    <name type="ordered locus">jhp_0447</name>
</gene>
<accession>Q9ZLX9</accession>
<sequence length="86" mass="10076">MPSDLEKPTIIYPCVWDYRVIMTTNDTSVLKELLETYQRPFKLELKNTSKNAKFYSFNVSMEVSNEAERNEIFQKISQLEVVAHAL</sequence>
<evidence type="ECO:0000305" key="1"/>
<feature type="chain" id="PRO_0000128687" description="Uncharacterized protein jhp_0447">
    <location>
        <begin position="1"/>
        <end position="86"/>
    </location>
</feature>
<dbReference type="EMBL" id="AE001439">
    <property type="protein sequence ID" value="AAD06025.1"/>
    <property type="molecule type" value="Genomic_DNA"/>
</dbReference>
<dbReference type="PIR" id="D71930">
    <property type="entry name" value="D71930"/>
</dbReference>
<dbReference type="RefSeq" id="WP_001138714.1">
    <property type="nucleotide sequence ID" value="NC_000921.1"/>
</dbReference>
<dbReference type="SMR" id="Q9ZLX9"/>
<dbReference type="KEGG" id="hpj:jhp_0447"/>
<dbReference type="PATRIC" id="fig|85963.30.peg.558"/>
<dbReference type="Proteomes" id="UP000000804">
    <property type="component" value="Chromosome"/>
</dbReference>
<dbReference type="Gene3D" id="3.30.70.260">
    <property type="match status" value="1"/>
</dbReference>
<dbReference type="InterPro" id="IPR007454">
    <property type="entry name" value="UPF0250_YbeD-like"/>
</dbReference>
<dbReference type="InterPro" id="IPR027471">
    <property type="entry name" value="YbeD-like_sf"/>
</dbReference>
<dbReference type="Pfam" id="PF04359">
    <property type="entry name" value="DUF493"/>
    <property type="match status" value="1"/>
</dbReference>
<dbReference type="SUPFAM" id="SSF117991">
    <property type="entry name" value="YbeD/HP0495-like"/>
    <property type="match status" value="1"/>
</dbReference>